<evidence type="ECO:0000255" key="1">
    <source>
        <dbReference type="HAMAP-Rule" id="MF_01345"/>
    </source>
</evidence>
<evidence type="ECO:0000305" key="2"/>
<sequence length="84" mass="9704">MTDKIRTLQGRVVSDKMEKSIVVAIERFVKHPIYGKFIKRTTKLHVHDENNECGIGDVVEIRECRPLSKTKSWTLVRVVEKAVL</sequence>
<keyword id="KW-0687">Ribonucleoprotein</keyword>
<keyword id="KW-0689">Ribosomal protein</keyword>
<keyword id="KW-0694">RNA-binding</keyword>
<keyword id="KW-0699">rRNA-binding</keyword>
<name>RS17_ECOL5</name>
<proteinExistence type="inferred from homology"/>
<feature type="chain" id="PRO_0000255677" description="Small ribosomal subunit protein uS17">
    <location>
        <begin position="1"/>
        <end position="84"/>
    </location>
</feature>
<organism>
    <name type="scientific">Escherichia coli O6:K15:H31 (strain 536 / UPEC)</name>
    <dbReference type="NCBI Taxonomy" id="362663"/>
    <lineage>
        <taxon>Bacteria</taxon>
        <taxon>Pseudomonadati</taxon>
        <taxon>Pseudomonadota</taxon>
        <taxon>Gammaproteobacteria</taxon>
        <taxon>Enterobacterales</taxon>
        <taxon>Enterobacteriaceae</taxon>
        <taxon>Escherichia</taxon>
    </lineage>
</organism>
<accession>Q0TCF0</accession>
<reference key="1">
    <citation type="journal article" date="2006" name="Mol. Microbiol.">
        <title>Role of pathogenicity island-associated integrases in the genome plasticity of uropathogenic Escherichia coli strain 536.</title>
        <authorList>
            <person name="Hochhut B."/>
            <person name="Wilde C."/>
            <person name="Balling G."/>
            <person name="Middendorf B."/>
            <person name="Dobrindt U."/>
            <person name="Brzuszkiewicz E."/>
            <person name="Gottschalk G."/>
            <person name="Carniel E."/>
            <person name="Hacker J."/>
        </authorList>
    </citation>
    <scope>NUCLEOTIDE SEQUENCE [LARGE SCALE GENOMIC DNA]</scope>
    <source>
        <strain>536 / UPEC</strain>
    </source>
</reference>
<comment type="function">
    <text evidence="1">One of the primary rRNA binding proteins, it binds specifically to the 5'-end of 16S ribosomal RNA.</text>
</comment>
<comment type="subunit">
    <text evidence="1">Part of the 30S ribosomal subunit.</text>
</comment>
<comment type="similarity">
    <text evidence="1">Belongs to the universal ribosomal protein uS17 family.</text>
</comment>
<gene>
    <name evidence="1" type="primary">rpsQ</name>
    <name type="ordered locus">ECP_3399</name>
</gene>
<protein>
    <recommendedName>
        <fullName evidence="1">Small ribosomal subunit protein uS17</fullName>
    </recommendedName>
    <alternativeName>
        <fullName evidence="2">30S ribosomal protein S17</fullName>
    </alternativeName>
</protein>
<dbReference type="EMBL" id="CP000247">
    <property type="protein sequence ID" value="ABG71379.1"/>
    <property type="molecule type" value="Genomic_DNA"/>
</dbReference>
<dbReference type="RefSeq" id="WP_000130100.1">
    <property type="nucleotide sequence ID" value="NC_008253.1"/>
</dbReference>
<dbReference type="SMR" id="Q0TCF0"/>
<dbReference type="GeneID" id="93778676"/>
<dbReference type="KEGG" id="ecp:ECP_3399"/>
<dbReference type="HOGENOM" id="CLU_073626_1_1_6"/>
<dbReference type="Proteomes" id="UP000009182">
    <property type="component" value="Chromosome"/>
</dbReference>
<dbReference type="GO" id="GO:0022627">
    <property type="term" value="C:cytosolic small ribosomal subunit"/>
    <property type="evidence" value="ECO:0007669"/>
    <property type="project" value="TreeGrafter"/>
</dbReference>
<dbReference type="GO" id="GO:0019843">
    <property type="term" value="F:rRNA binding"/>
    <property type="evidence" value="ECO:0007669"/>
    <property type="project" value="UniProtKB-UniRule"/>
</dbReference>
<dbReference type="GO" id="GO:0003735">
    <property type="term" value="F:structural constituent of ribosome"/>
    <property type="evidence" value="ECO:0007669"/>
    <property type="project" value="InterPro"/>
</dbReference>
<dbReference type="GO" id="GO:0006412">
    <property type="term" value="P:translation"/>
    <property type="evidence" value="ECO:0007669"/>
    <property type="project" value="UniProtKB-UniRule"/>
</dbReference>
<dbReference type="CDD" id="cd00364">
    <property type="entry name" value="Ribosomal_uS17"/>
    <property type="match status" value="1"/>
</dbReference>
<dbReference type="FunFam" id="2.40.50.140:FF:000014">
    <property type="entry name" value="30S ribosomal protein S17"/>
    <property type="match status" value="1"/>
</dbReference>
<dbReference type="Gene3D" id="2.40.50.140">
    <property type="entry name" value="Nucleic acid-binding proteins"/>
    <property type="match status" value="1"/>
</dbReference>
<dbReference type="HAMAP" id="MF_01345_B">
    <property type="entry name" value="Ribosomal_uS17_B"/>
    <property type="match status" value="1"/>
</dbReference>
<dbReference type="InterPro" id="IPR012340">
    <property type="entry name" value="NA-bd_OB-fold"/>
</dbReference>
<dbReference type="InterPro" id="IPR000266">
    <property type="entry name" value="Ribosomal_uS17"/>
</dbReference>
<dbReference type="InterPro" id="IPR019984">
    <property type="entry name" value="Ribosomal_uS17_bact/chlr"/>
</dbReference>
<dbReference type="InterPro" id="IPR019979">
    <property type="entry name" value="Ribosomal_uS17_CS"/>
</dbReference>
<dbReference type="NCBIfam" id="NF004123">
    <property type="entry name" value="PRK05610.1"/>
    <property type="match status" value="1"/>
</dbReference>
<dbReference type="NCBIfam" id="TIGR03635">
    <property type="entry name" value="uS17_bact"/>
    <property type="match status" value="1"/>
</dbReference>
<dbReference type="PANTHER" id="PTHR10744">
    <property type="entry name" value="40S RIBOSOMAL PROTEIN S11 FAMILY MEMBER"/>
    <property type="match status" value="1"/>
</dbReference>
<dbReference type="PANTHER" id="PTHR10744:SF1">
    <property type="entry name" value="SMALL RIBOSOMAL SUBUNIT PROTEIN US17M"/>
    <property type="match status" value="1"/>
</dbReference>
<dbReference type="Pfam" id="PF00366">
    <property type="entry name" value="Ribosomal_S17"/>
    <property type="match status" value="1"/>
</dbReference>
<dbReference type="PRINTS" id="PR00973">
    <property type="entry name" value="RIBOSOMALS17"/>
</dbReference>
<dbReference type="SUPFAM" id="SSF50249">
    <property type="entry name" value="Nucleic acid-binding proteins"/>
    <property type="match status" value="1"/>
</dbReference>
<dbReference type="PROSITE" id="PS00056">
    <property type="entry name" value="RIBOSOMAL_S17"/>
    <property type="match status" value="1"/>
</dbReference>